<proteinExistence type="evidence at protein level"/>
<accession>Q6ZQR2</accession>
<accession>Q147X1</accession>
<name>CFA77_HUMAN</name>
<evidence type="ECO:0000250" key="1">
    <source>
        <dbReference type="UniProtKB" id="A0A087WRI3"/>
    </source>
</evidence>
<evidence type="ECO:0000256" key="2">
    <source>
        <dbReference type="SAM" id="MobiDB-lite"/>
    </source>
</evidence>
<evidence type="ECO:0000269" key="3">
    <source>
    </source>
</evidence>
<evidence type="ECO:0000269" key="4">
    <source>
    </source>
</evidence>
<evidence type="ECO:0000303" key="5">
    <source>
    </source>
</evidence>
<evidence type="ECO:0000305" key="6"/>
<evidence type="ECO:0000312" key="7">
    <source>
        <dbReference type="HGNC" id="HGNC:33776"/>
    </source>
</evidence>
<evidence type="ECO:0007744" key="8">
    <source>
        <dbReference type="PDB" id="7UNG"/>
    </source>
</evidence>
<gene>
    <name evidence="7" type="primary">CFAP77</name>
    <name evidence="7" type="synonym">C9orf171</name>
</gene>
<keyword id="KW-0002">3D-structure</keyword>
<keyword id="KW-0025">Alternative splicing</keyword>
<keyword id="KW-0966">Cell projection</keyword>
<keyword id="KW-0969">Cilium</keyword>
<keyword id="KW-0963">Cytoplasm</keyword>
<keyword id="KW-0206">Cytoskeleton</keyword>
<keyword id="KW-0282">Flagellum</keyword>
<keyword id="KW-1267">Proteomics identification</keyword>
<keyword id="KW-1185">Reference proteome</keyword>
<sequence length="320" mass="36499">MPEARSSGPDLTRWRKQQQPVRRTVSQVCPPPRRPLTVADIRSGMENERLGVVRDSMFQNPLIVKAAGPASVGTSYSVYDSSAVQKVIPSLAGHHIKGGPQAELGKPRERSYSLPGINFNYGLYIRGLDGGVPEAIGRWNVFKQQPTCPHELTRNYIAMNRGAVKAGLVTARENLLYRQLNDIRISDQDDRRMKKEPPPLPPNMTFGIRARPSTPFFDLLQHRYLQLWVQEQKATQKAIKLEKKQKVVLGKLYETRSSQLRKYKPPVKLDTLWHMPHFQKVGRHLDTFPTEADRQRALKAHREECAVRQGTLRMGNYTHP</sequence>
<feature type="chain" id="PRO_0000325973" description="Cilia- and flagella-associated protein 77">
    <location>
        <begin position="1"/>
        <end position="320"/>
    </location>
</feature>
<feature type="region of interest" description="Disordered" evidence="2">
    <location>
        <begin position="1"/>
        <end position="27"/>
    </location>
</feature>
<feature type="compositionally biased region" description="Polar residues" evidence="2">
    <location>
        <begin position="17"/>
        <end position="27"/>
    </location>
</feature>
<feature type="splice variant" id="VSP_032507" description="In isoform 2." evidence="5">
    <location>
        <begin position="67"/>
        <end position="102"/>
    </location>
</feature>
<feature type="sequence variant" id="VAR_039959" description="In dbSNP:rs7047726.">
    <original>G</original>
    <variation>R</variation>
    <location>
        <position position="137"/>
    </location>
</feature>
<feature type="sequence variant" id="VAR_039960" description="In a colorectal cancer sample; somatic mutation; dbSNP:rs149346027." evidence="3">
    <original>R</original>
    <variation>W</variation>
    <location>
        <position position="172"/>
    </location>
</feature>
<feature type="sequence variant" id="VAR_039961" description="In dbSNP:rs11243798.">
    <original>R</original>
    <variation>H</variation>
    <location>
        <position position="184"/>
    </location>
</feature>
<feature type="sequence variant" id="VAR_062164" description="In dbSNP:rs34650498.">
    <original>K</original>
    <variation>Q</variation>
    <location>
        <position position="244"/>
    </location>
</feature>
<reference key="1">
    <citation type="journal article" date="2004" name="Nat. Genet.">
        <title>Complete sequencing and characterization of 21,243 full-length human cDNAs.</title>
        <authorList>
            <person name="Ota T."/>
            <person name="Suzuki Y."/>
            <person name="Nishikawa T."/>
            <person name="Otsuki T."/>
            <person name="Sugiyama T."/>
            <person name="Irie R."/>
            <person name="Wakamatsu A."/>
            <person name="Hayashi K."/>
            <person name="Sato H."/>
            <person name="Nagai K."/>
            <person name="Kimura K."/>
            <person name="Makita H."/>
            <person name="Sekine M."/>
            <person name="Obayashi M."/>
            <person name="Nishi T."/>
            <person name="Shibahara T."/>
            <person name="Tanaka T."/>
            <person name="Ishii S."/>
            <person name="Yamamoto J."/>
            <person name="Saito K."/>
            <person name="Kawai Y."/>
            <person name="Isono Y."/>
            <person name="Nakamura Y."/>
            <person name="Nagahari K."/>
            <person name="Murakami K."/>
            <person name="Yasuda T."/>
            <person name="Iwayanagi T."/>
            <person name="Wagatsuma M."/>
            <person name="Shiratori A."/>
            <person name="Sudo H."/>
            <person name="Hosoiri T."/>
            <person name="Kaku Y."/>
            <person name="Kodaira H."/>
            <person name="Kondo H."/>
            <person name="Sugawara M."/>
            <person name="Takahashi M."/>
            <person name="Kanda K."/>
            <person name="Yokoi T."/>
            <person name="Furuya T."/>
            <person name="Kikkawa E."/>
            <person name="Omura Y."/>
            <person name="Abe K."/>
            <person name="Kamihara K."/>
            <person name="Katsuta N."/>
            <person name="Sato K."/>
            <person name="Tanikawa M."/>
            <person name="Yamazaki M."/>
            <person name="Ninomiya K."/>
            <person name="Ishibashi T."/>
            <person name="Yamashita H."/>
            <person name="Murakawa K."/>
            <person name="Fujimori K."/>
            <person name="Tanai H."/>
            <person name="Kimata M."/>
            <person name="Watanabe M."/>
            <person name="Hiraoka S."/>
            <person name="Chiba Y."/>
            <person name="Ishida S."/>
            <person name="Ono Y."/>
            <person name="Takiguchi S."/>
            <person name="Watanabe S."/>
            <person name="Yosida M."/>
            <person name="Hotuta T."/>
            <person name="Kusano J."/>
            <person name="Kanehori K."/>
            <person name="Takahashi-Fujii A."/>
            <person name="Hara H."/>
            <person name="Tanase T.-O."/>
            <person name="Nomura Y."/>
            <person name="Togiya S."/>
            <person name="Komai F."/>
            <person name="Hara R."/>
            <person name="Takeuchi K."/>
            <person name="Arita M."/>
            <person name="Imose N."/>
            <person name="Musashino K."/>
            <person name="Yuuki H."/>
            <person name="Oshima A."/>
            <person name="Sasaki N."/>
            <person name="Aotsuka S."/>
            <person name="Yoshikawa Y."/>
            <person name="Matsunawa H."/>
            <person name="Ichihara T."/>
            <person name="Shiohata N."/>
            <person name="Sano S."/>
            <person name="Moriya S."/>
            <person name="Momiyama H."/>
            <person name="Satoh N."/>
            <person name="Takami S."/>
            <person name="Terashima Y."/>
            <person name="Suzuki O."/>
            <person name="Nakagawa S."/>
            <person name="Senoh A."/>
            <person name="Mizoguchi H."/>
            <person name="Goto Y."/>
            <person name="Shimizu F."/>
            <person name="Wakebe H."/>
            <person name="Hishigaki H."/>
            <person name="Watanabe T."/>
            <person name="Sugiyama A."/>
            <person name="Takemoto M."/>
            <person name="Kawakami B."/>
            <person name="Yamazaki M."/>
            <person name="Watanabe K."/>
            <person name="Kumagai A."/>
            <person name="Itakura S."/>
            <person name="Fukuzumi Y."/>
            <person name="Fujimori Y."/>
            <person name="Komiyama M."/>
            <person name="Tashiro H."/>
            <person name="Tanigami A."/>
            <person name="Fujiwara T."/>
            <person name="Ono T."/>
            <person name="Yamada K."/>
            <person name="Fujii Y."/>
            <person name="Ozaki K."/>
            <person name="Hirao M."/>
            <person name="Ohmori Y."/>
            <person name="Kawabata A."/>
            <person name="Hikiji T."/>
            <person name="Kobatake N."/>
            <person name="Inagaki H."/>
            <person name="Ikema Y."/>
            <person name="Okamoto S."/>
            <person name="Okitani R."/>
            <person name="Kawakami T."/>
            <person name="Noguchi S."/>
            <person name="Itoh T."/>
            <person name="Shigeta K."/>
            <person name="Senba T."/>
            <person name="Matsumura K."/>
            <person name="Nakajima Y."/>
            <person name="Mizuno T."/>
            <person name="Morinaga M."/>
            <person name="Sasaki M."/>
            <person name="Togashi T."/>
            <person name="Oyama M."/>
            <person name="Hata H."/>
            <person name="Watanabe M."/>
            <person name="Komatsu T."/>
            <person name="Mizushima-Sugano J."/>
            <person name="Satoh T."/>
            <person name="Shirai Y."/>
            <person name="Takahashi Y."/>
            <person name="Nakagawa K."/>
            <person name="Okumura K."/>
            <person name="Nagase T."/>
            <person name="Nomura N."/>
            <person name="Kikuchi H."/>
            <person name="Masuho Y."/>
            <person name="Yamashita R."/>
            <person name="Nakai K."/>
            <person name="Yada T."/>
            <person name="Nakamura Y."/>
            <person name="Ohara O."/>
            <person name="Isogai T."/>
            <person name="Sugano S."/>
        </authorList>
    </citation>
    <scope>NUCLEOTIDE SEQUENCE [LARGE SCALE MRNA] (ISOFORM 1)</scope>
    <source>
        <tissue>Testis</tissue>
    </source>
</reference>
<reference key="2">
    <citation type="journal article" date="2004" name="Nature">
        <title>DNA sequence and analysis of human chromosome 9.</title>
        <authorList>
            <person name="Humphray S.J."/>
            <person name="Oliver K."/>
            <person name="Hunt A.R."/>
            <person name="Plumb R.W."/>
            <person name="Loveland J.E."/>
            <person name="Howe K.L."/>
            <person name="Andrews T.D."/>
            <person name="Searle S."/>
            <person name="Hunt S.E."/>
            <person name="Scott C.E."/>
            <person name="Jones M.C."/>
            <person name="Ainscough R."/>
            <person name="Almeida J.P."/>
            <person name="Ambrose K.D."/>
            <person name="Ashwell R.I.S."/>
            <person name="Babbage A.K."/>
            <person name="Babbage S."/>
            <person name="Bagguley C.L."/>
            <person name="Bailey J."/>
            <person name="Banerjee R."/>
            <person name="Barker D.J."/>
            <person name="Barlow K.F."/>
            <person name="Bates K."/>
            <person name="Beasley H."/>
            <person name="Beasley O."/>
            <person name="Bird C.P."/>
            <person name="Bray-Allen S."/>
            <person name="Brown A.J."/>
            <person name="Brown J.Y."/>
            <person name="Burford D."/>
            <person name="Burrill W."/>
            <person name="Burton J."/>
            <person name="Carder C."/>
            <person name="Carter N.P."/>
            <person name="Chapman J.C."/>
            <person name="Chen Y."/>
            <person name="Clarke G."/>
            <person name="Clark S.Y."/>
            <person name="Clee C.M."/>
            <person name="Clegg S."/>
            <person name="Collier R.E."/>
            <person name="Corby N."/>
            <person name="Crosier M."/>
            <person name="Cummings A.T."/>
            <person name="Davies J."/>
            <person name="Dhami P."/>
            <person name="Dunn M."/>
            <person name="Dutta I."/>
            <person name="Dyer L.W."/>
            <person name="Earthrowl M.E."/>
            <person name="Faulkner L."/>
            <person name="Fleming C.J."/>
            <person name="Frankish A."/>
            <person name="Frankland J.A."/>
            <person name="French L."/>
            <person name="Fricker D.G."/>
            <person name="Garner P."/>
            <person name="Garnett J."/>
            <person name="Ghori J."/>
            <person name="Gilbert J.G.R."/>
            <person name="Glison C."/>
            <person name="Grafham D.V."/>
            <person name="Gribble S."/>
            <person name="Griffiths C."/>
            <person name="Griffiths-Jones S."/>
            <person name="Grocock R."/>
            <person name="Guy J."/>
            <person name="Hall R.E."/>
            <person name="Hammond S."/>
            <person name="Harley J.L."/>
            <person name="Harrison E.S.I."/>
            <person name="Hart E.A."/>
            <person name="Heath P.D."/>
            <person name="Henderson C.D."/>
            <person name="Hopkins B.L."/>
            <person name="Howard P.J."/>
            <person name="Howden P.J."/>
            <person name="Huckle E."/>
            <person name="Johnson C."/>
            <person name="Johnson D."/>
            <person name="Joy A.A."/>
            <person name="Kay M."/>
            <person name="Keenan S."/>
            <person name="Kershaw J.K."/>
            <person name="Kimberley A.M."/>
            <person name="King A."/>
            <person name="Knights A."/>
            <person name="Laird G.K."/>
            <person name="Langford C."/>
            <person name="Lawlor S."/>
            <person name="Leongamornlert D.A."/>
            <person name="Leversha M."/>
            <person name="Lloyd C."/>
            <person name="Lloyd D.M."/>
            <person name="Lovell J."/>
            <person name="Martin S."/>
            <person name="Mashreghi-Mohammadi M."/>
            <person name="Matthews L."/>
            <person name="McLaren S."/>
            <person name="McLay K.E."/>
            <person name="McMurray A."/>
            <person name="Milne S."/>
            <person name="Nickerson T."/>
            <person name="Nisbett J."/>
            <person name="Nordsiek G."/>
            <person name="Pearce A.V."/>
            <person name="Peck A.I."/>
            <person name="Porter K.M."/>
            <person name="Pandian R."/>
            <person name="Pelan S."/>
            <person name="Phillimore B."/>
            <person name="Povey S."/>
            <person name="Ramsey Y."/>
            <person name="Rand V."/>
            <person name="Scharfe M."/>
            <person name="Sehra H.K."/>
            <person name="Shownkeen R."/>
            <person name="Sims S.K."/>
            <person name="Skuce C.D."/>
            <person name="Smith M."/>
            <person name="Steward C.A."/>
            <person name="Swarbreck D."/>
            <person name="Sycamore N."/>
            <person name="Tester J."/>
            <person name="Thorpe A."/>
            <person name="Tracey A."/>
            <person name="Tromans A."/>
            <person name="Thomas D.W."/>
            <person name="Wall M."/>
            <person name="Wallis J.M."/>
            <person name="West A.P."/>
            <person name="Whitehead S.L."/>
            <person name="Willey D.L."/>
            <person name="Williams S.A."/>
            <person name="Wilming L."/>
            <person name="Wray P.W."/>
            <person name="Young L."/>
            <person name="Ashurst J.L."/>
            <person name="Coulson A."/>
            <person name="Blocker H."/>
            <person name="Durbin R.M."/>
            <person name="Sulston J.E."/>
            <person name="Hubbard T."/>
            <person name="Jackson M.J."/>
            <person name="Bentley D.R."/>
            <person name="Beck S."/>
            <person name="Rogers J."/>
            <person name="Dunham I."/>
        </authorList>
    </citation>
    <scope>NUCLEOTIDE SEQUENCE [LARGE SCALE GENOMIC DNA]</scope>
</reference>
<reference key="3">
    <citation type="submission" date="2005-07" db="EMBL/GenBank/DDBJ databases">
        <authorList>
            <person name="Mural R.J."/>
            <person name="Istrail S."/>
            <person name="Sutton G.G."/>
            <person name="Florea L."/>
            <person name="Halpern A.L."/>
            <person name="Mobarry C.M."/>
            <person name="Lippert R."/>
            <person name="Walenz B."/>
            <person name="Shatkay H."/>
            <person name="Dew I."/>
            <person name="Miller J.R."/>
            <person name="Flanigan M.J."/>
            <person name="Edwards N.J."/>
            <person name="Bolanos R."/>
            <person name="Fasulo D."/>
            <person name="Halldorsson B.V."/>
            <person name="Hannenhalli S."/>
            <person name="Turner R."/>
            <person name="Yooseph S."/>
            <person name="Lu F."/>
            <person name="Nusskern D.R."/>
            <person name="Shue B.C."/>
            <person name="Zheng X.H."/>
            <person name="Zhong F."/>
            <person name="Delcher A.L."/>
            <person name="Huson D.H."/>
            <person name="Kravitz S.A."/>
            <person name="Mouchard L."/>
            <person name="Reinert K."/>
            <person name="Remington K.A."/>
            <person name="Clark A.G."/>
            <person name="Waterman M.S."/>
            <person name="Eichler E.E."/>
            <person name="Adams M.D."/>
            <person name="Hunkapiller M.W."/>
            <person name="Myers E.W."/>
            <person name="Venter J.C."/>
        </authorList>
    </citation>
    <scope>NUCLEOTIDE SEQUENCE [LARGE SCALE GENOMIC DNA]</scope>
</reference>
<reference key="4">
    <citation type="journal article" date="2004" name="Genome Res.">
        <title>The status, quality, and expansion of the NIH full-length cDNA project: the Mammalian Gene Collection (MGC).</title>
        <authorList>
            <consortium name="The MGC Project Team"/>
        </authorList>
    </citation>
    <scope>NUCLEOTIDE SEQUENCE [LARGE SCALE MRNA] (ISOFORM 2)</scope>
</reference>
<reference evidence="8" key="5">
    <citation type="journal article" date="2022" name="Proc. Natl. Acad. Sci. U.S.A.">
        <title>SPACA9 is a lumenal protein of human ciliary singlet and doublet microtubules.</title>
        <authorList>
            <person name="Gui M."/>
            <person name="Croft J.T."/>
            <person name="Zabeo D."/>
            <person name="Acharya V."/>
            <person name="Kollman J.M."/>
            <person name="Burgoyne T."/>
            <person name="Hoog J.L."/>
            <person name="Brown A."/>
        </authorList>
    </citation>
    <scope>STRUCTURE BY ELECTRON MICROSCOPY (3.60 ANGSTROMS)</scope>
    <scope>FUNCTION</scope>
    <scope>SUBCELLULAR LOCATION</scope>
    <scope>TISSUE SPECIFICITY</scope>
</reference>
<reference key="6">
    <citation type="journal article" date="2006" name="Science">
        <title>The consensus coding sequences of human breast and colorectal cancers.</title>
        <authorList>
            <person name="Sjoeblom T."/>
            <person name="Jones S."/>
            <person name="Wood L.D."/>
            <person name="Parsons D.W."/>
            <person name="Lin J."/>
            <person name="Barber T.D."/>
            <person name="Mandelker D."/>
            <person name="Leary R.J."/>
            <person name="Ptak J."/>
            <person name="Silliman N."/>
            <person name="Szabo S."/>
            <person name="Buckhaults P."/>
            <person name="Farrell C."/>
            <person name="Meeh P."/>
            <person name="Markowitz S.D."/>
            <person name="Willis J."/>
            <person name="Dawson D."/>
            <person name="Willson J.K.V."/>
            <person name="Gazdar A.F."/>
            <person name="Hartigan J."/>
            <person name="Wu L."/>
            <person name="Liu C."/>
            <person name="Parmigiani G."/>
            <person name="Park B.H."/>
            <person name="Bachman K.E."/>
            <person name="Papadopoulos N."/>
            <person name="Vogelstein B."/>
            <person name="Kinzler K.W."/>
            <person name="Velculescu V.E."/>
        </authorList>
    </citation>
    <scope>VARIANT [LARGE SCALE ANALYSIS] TRP-172</scope>
</reference>
<organism>
    <name type="scientific">Homo sapiens</name>
    <name type="common">Human</name>
    <dbReference type="NCBI Taxonomy" id="9606"/>
    <lineage>
        <taxon>Eukaryota</taxon>
        <taxon>Metazoa</taxon>
        <taxon>Chordata</taxon>
        <taxon>Craniata</taxon>
        <taxon>Vertebrata</taxon>
        <taxon>Euteleostomi</taxon>
        <taxon>Mammalia</taxon>
        <taxon>Eutheria</taxon>
        <taxon>Euarchontoglires</taxon>
        <taxon>Primates</taxon>
        <taxon>Haplorrhini</taxon>
        <taxon>Catarrhini</taxon>
        <taxon>Hominidae</taxon>
        <taxon>Homo</taxon>
    </lineage>
</organism>
<comment type="function">
    <text evidence="4">Microtubule inner protein (MIP) part of the dynein-decorated doublet microtubules (DMTs) in cilia axoneme, which is required for motile cilia beating.</text>
</comment>
<comment type="subunit">
    <text evidence="1">Microtubule inner protein component of sperm flagellar doublet microtubules.</text>
</comment>
<comment type="interaction">
    <interactant intactId="EBI-10255140">
        <id>Q6ZQR2</id>
    </interactant>
    <interactant intactId="EBI-533224">
        <id>P15884</id>
        <label>TCF4</label>
    </interactant>
    <organismsDiffer>false</organismsDiffer>
    <experiments>3</experiments>
</comment>
<comment type="subcellular location">
    <subcellularLocation>
        <location evidence="4">Cytoplasm</location>
        <location evidence="4">Cytoskeleton</location>
        <location evidence="4">Cilium axoneme</location>
    </subcellularLocation>
    <subcellularLocation>
        <location evidence="1">Cytoplasm</location>
        <location evidence="1">Cytoskeleton</location>
        <location evidence="1">Flagellum axoneme</location>
    </subcellularLocation>
</comment>
<comment type="alternative products">
    <event type="alternative splicing"/>
    <isoform>
        <id>Q6ZQR2-1</id>
        <name>1</name>
        <sequence type="displayed"/>
    </isoform>
    <isoform>
        <id>Q6ZQR2-2</id>
        <name>2</name>
        <sequence type="described" ref="VSP_032507"/>
    </isoform>
</comment>
<comment type="tissue specificity">
    <text evidence="4">Expressed in airway epithelial cells.</text>
</comment>
<comment type="similarity">
    <text evidence="6">Belongs to the CFAP77 family.</text>
</comment>
<dbReference type="EMBL" id="AK128819">
    <property type="protein sequence ID" value="BAC87621.1"/>
    <property type="molecule type" value="mRNA"/>
</dbReference>
<dbReference type="EMBL" id="AL353701">
    <property type="status" value="NOT_ANNOTATED_CDS"/>
    <property type="molecule type" value="Genomic_DNA"/>
</dbReference>
<dbReference type="EMBL" id="AL354735">
    <property type="status" value="NOT_ANNOTATED_CDS"/>
    <property type="molecule type" value="Genomic_DNA"/>
</dbReference>
<dbReference type="EMBL" id="CH471090">
    <property type="protein sequence ID" value="EAW88003.1"/>
    <property type="molecule type" value="Genomic_DNA"/>
</dbReference>
<dbReference type="EMBL" id="CH471090">
    <property type="protein sequence ID" value="EAW88004.1"/>
    <property type="molecule type" value="Genomic_DNA"/>
</dbReference>
<dbReference type="EMBL" id="BC118593">
    <property type="protein sequence ID" value="AAI18594.1"/>
    <property type="molecule type" value="mRNA"/>
</dbReference>
<dbReference type="EMBL" id="BC124555">
    <property type="protein sequence ID" value="AAI24556.1"/>
    <property type="molecule type" value="mRNA"/>
</dbReference>
<dbReference type="CCDS" id="CCDS65167.1">
    <molecule id="Q6ZQR2-2"/>
</dbReference>
<dbReference type="CCDS" id="CCDS6949.1">
    <molecule id="Q6ZQR2-1"/>
</dbReference>
<dbReference type="RefSeq" id="NP_001269886.1">
    <molecule id="Q6ZQR2-2"/>
    <property type="nucleotide sequence ID" value="NM_001282957.2"/>
</dbReference>
<dbReference type="RefSeq" id="NP_997300.1">
    <molecule id="Q6ZQR2-1"/>
    <property type="nucleotide sequence ID" value="NM_207417.3"/>
</dbReference>
<dbReference type="PDB" id="7UNG">
    <property type="method" value="EM"/>
    <property type="resolution" value="3.60 A"/>
    <property type="chains" value="J1/J2/J3/J4/J5=1-320"/>
</dbReference>
<dbReference type="PDB" id="8J07">
    <property type="method" value="EM"/>
    <property type="resolution" value="4.10 A"/>
    <property type="chains" value="5O/5P/5Q/5R/5S/5T/5U/5V=1-320"/>
</dbReference>
<dbReference type="PDBsum" id="7UNG"/>
<dbReference type="PDBsum" id="8J07"/>
<dbReference type="EMDB" id="EMD-26624"/>
<dbReference type="EMDB" id="EMD-35888"/>
<dbReference type="SMR" id="Q6ZQR2"/>
<dbReference type="BioGRID" id="133276">
    <property type="interactions" value="7"/>
</dbReference>
<dbReference type="FunCoup" id="Q6ZQR2">
    <property type="interactions" value="14"/>
</dbReference>
<dbReference type="IntAct" id="Q6ZQR2">
    <property type="interactions" value="5"/>
</dbReference>
<dbReference type="STRING" id="9606.ENSP00000343290"/>
<dbReference type="iPTMnet" id="Q6ZQR2"/>
<dbReference type="PhosphoSitePlus" id="Q6ZQR2"/>
<dbReference type="BioMuta" id="CFAP77"/>
<dbReference type="DMDM" id="74710954"/>
<dbReference type="jPOST" id="Q6ZQR2"/>
<dbReference type="MassIVE" id="Q6ZQR2"/>
<dbReference type="PaxDb" id="9606-ENSP00000343290"/>
<dbReference type="PeptideAtlas" id="Q6ZQR2"/>
<dbReference type="ProteomicsDB" id="68087">
    <molecule id="Q6ZQR2-1"/>
</dbReference>
<dbReference type="ProteomicsDB" id="68088">
    <molecule id="Q6ZQR2-2"/>
</dbReference>
<dbReference type="Antibodypedia" id="18193">
    <property type="antibodies" value="21 antibodies from 8 providers"/>
</dbReference>
<dbReference type="DNASU" id="389799"/>
<dbReference type="Ensembl" id="ENST00000343036.6">
    <molecule id="Q6ZQR2-1"/>
    <property type="protein sequence ID" value="ENSP00000343290.2"/>
    <property type="gene ID" value="ENSG00000188523.9"/>
</dbReference>
<dbReference type="Ensembl" id="ENST00000393216.3">
    <molecule id="Q6ZQR2-2"/>
    <property type="protein sequence ID" value="ENSP00000376909.2"/>
    <property type="gene ID" value="ENSG00000188523.9"/>
</dbReference>
<dbReference type="GeneID" id="389799"/>
<dbReference type="KEGG" id="hsa:389799"/>
<dbReference type="MANE-Select" id="ENST00000393216.3">
    <molecule id="Q6ZQR2-2"/>
    <property type="protein sequence ID" value="ENSP00000376909.2"/>
    <property type="RefSeq nucleotide sequence ID" value="NM_001282957.2"/>
    <property type="RefSeq protein sequence ID" value="NP_001269886.1"/>
</dbReference>
<dbReference type="UCSC" id="uc004cbn.5">
    <molecule id="Q6ZQR2-1"/>
    <property type="organism name" value="human"/>
</dbReference>
<dbReference type="AGR" id="HGNC:33776"/>
<dbReference type="CTD" id="389799"/>
<dbReference type="DisGeNET" id="389799"/>
<dbReference type="GeneCards" id="CFAP77"/>
<dbReference type="HGNC" id="HGNC:33776">
    <property type="gene designation" value="CFAP77"/>
</dbReference>
<dbReference type="HPA" id="ENSG00000188523">
    <property type="expression patterns" value="Group enriched (choroid plexus, fallopian tube, testis)"/>
</dbReference>
<dbReference type="neXtProt" id="NX_Q6ZQR2"/>
<dbReference type="OpenTargets" id="ENSG00000188523"/>
<dbReference type="PharmGKB" id="PA164717530"/>
<dbReference type="VEuPathDB" id="HostDB:ENSG00000188523"/>
<dbReference type="eggNOG" id="ENOG502S0WI">
    <property type="taxonomic scope" value="Eukaryota"/>
</dbReference>
<dbReference type="GeneTree" id="ENSGT00390000014476"/>
<dbReference type="HOGENOM" id="CLU_060116_0_0_1"/>
<dbReference type="InParanoid" id="Q6ZQR2"/>
<dbReference type="OMA" id="QPTCPQE"/>
<dbReference type="OrthoDB" id="532484at2759"/>
<dbReference type="PAN-GO" id="Q6ZQR2">
    <property type="GO annotations" value="0 GO annotations based on evolutionary models"/>
</dbReference>
<dbReference type="PhylomeDB" id="Q6ZQR2"/>
<dbReference type="TreeFam" id="TF329723"/>
<dbReference type="PathwayCommons" id="Q6ZQR2"/>
<dbReference type="SignaLink" id="Q6ZQR2"/>
<dbReference type="BioGRID-ORCS" id="389799">
    <property type="hits" value="24 hits in 1121 CRISPR screens"/>
</dbReference>
<dbReference type="ChiTaRS" id="CFAP77">
    <property type="organism name" value="human"/>
</dbReference>
<dbReference type="GenomeRNAi" id="389799"/>
<dbReference type="Pharos" id="Q6ZQR2">
    <property type="development level" value="Tdark"/>
</dbReference>
<dbReference type="PRO" id="PR:Q6ZQR2"/>
<dbReference type="Proteomes" id="UP000005640">
    <property type="component" value="Chromosome 9"/>
</dbReference>
<dbReference type="RNAct" id="Q6ZQR2">
    <property type="molecule type" value="protein"/>
</dbReference>
<dbReference type="Bgee" id="ENSG00000188523">
    <property type="expression patterns" value="Expressed in right uterine tube and 57 other cell types or tissues"/>
</dbReference>
<dbReference type="ExpressionAtlas" id="Q6ZQR2">
    <property type="expression patterns" value="baseline and differential"/>
</dbReference>
<dbReference type="GO" id="GO:0160112">
    <property type="term" value="C:axonemal B tubule inner sheath"/>
    <property type="evidence" value="ECO:0000250"/>
    <property type="project" value="UniProtKB"/>
</dbReference>
<dbReference type="GO" id="GO:0005879">
    <property type="term" value="C:axonemal microtubule"/>
    <property type="evidence" value="ECO:0000314"/>
    <property type="project" value="UniProtKB"/>
</dbReference>
<dbReference type="GO" id="GO:0036126">
    <property type="term" value="C:sperm flagellum"/>
    <property type="evidence" value="ECO:0000250"/>
    <property type="project" value="UniProtKB"/>
</dbReference>
<dbReference type="GO" id="GO:0030317">
    <property type="term" value="P:flagellated sperm motility"/>
    <property type="evidence" value="ECO:0000250"/>
    <property type="project" value="UniProtKB"/>
</dbReference>
<dbReference type="InterPro" id="IPR029147">
    <property type="entry name" value="CFAP77"/>
</dbReference>
<dbReference type="PANTHER" id="PTHR28617">
    <property type="entry name" value="CILIA- AND FLAGELLA-ASSOCIATED PROTEIN 77"/>
    <property type="match status" value="1"/>
</dbReference>
<dbReference type="PANTHER" id="PTHR28617:SF1">
    <property type="entry name" value="CILIA- AND FLAGELLA-ASSOCIATED PROTEIN 77"/>
    <property type="match status" value="1"/>
</dbReference>
<dbReference type="Pfam" id="PF14825">
    <property type="entry name" value="CFAP77"/>
    <property type="match status" value="1"/>
</dbReference>
<protein>
    <recommendedName>
        <fullName evidence="6">Cilia- and flagella-associated protein 77</fullName>
    </recommendedName>
</protein>